<gene>
    <name type="primary">nop16</name>
    <name type="ORF">GSTENG00014579001</name>
</gene>
<name>NOP16_TETNG</name>
<protein>
    <recommendedName>
        <fullName>Nucleolar protein 16</fullName>
    </recommendedName>
</protein>
<comment type="subcellular location">
    <subcellularLocation>
        <location evidence="1">Nucleus</location>
        <location evidence="1">Nucleolus</location>
    </subcellularLocation>
</comment>
<comment type="similarity">
    <text evidence="2">Belongs to the NOP16 family.</text>
</comment>
<organism>
    <name type="scientific">Tetraodon nigroviridis</name>
    <name type="common">Spotted green pufferfish</name>
    <name type="synonym">Chelonodon nigroviridis</name>
    <dbReference type="NCBI Taxonomy" id="99883"/>
    <lineage>
        <taxon>Eukaryota</taxon>
        <taxon>Metazoa</taxon>
        <taxon>Chordata</taxon>
        <taxon>Craniata</taxon>
        <taxon>Vertebrata</taxon>
        <taxon>Euteleostomi</taxon>
        <taxon>Actinopterygii</taxon>
        <taxon>Neopterygii</taxon>
        <taxon>Teleostei</taxon>
        <taxon>Neoteleostei</taxon>
        <taxon>Acanthomorphata</taxon>
        <taxon>Eupercaria</taxon>
        <taxon>Tetraodontiformes</taxon>
        <taxon>Tetradontoidea</taxon>
        <taxon>Tetraodontidae</taxon>
        <taxon>Tetraodon</taxon>
    </lineage>
</organism>
<sequence>MPKAKKSGRKKKYNYEQDRKKLKKKFIKKSNPRIENPQIRNAWDNRKSTARNLQDMGLAFDPNRALPLKKTSLFSGEIEPKPSTNIVIKPYVLNQLEEEASRPEKDTKTLSSDLIEYVQHMIREHGDNYKAMARDEKNYYQDTPKQIRRKVAEYKRCHPQQFDAFLESLG</sequence>
<keyword id="KW-0539">Nucleus</keyword>
<keyword id="KW-1185">Reference proteome</keyword>
<accession>Q4SQ06</accession>
<reference key="1">
    <citation type="journal article" date="2004" name="Nature">
        <title>Genome duplication in the teleost fish Tetraodon nigroviridis reveals the early vertebrate proto-karyotype.</title>
        <authorList>
            <person name="Jaillon O."/>
            <person name="Aury J.-M."/>
            <person name="Brunet F."/>
            <person name="Petit J.-L."/>
            <person name="Stange-Thomann N."/>
            <person name="Mauceli E."/>
            <person name="Bouneau L."/>
            <person name="Fischer C."/>
            <person name="Ozouf-Costaz C."/>
            <person name="Bernot A."/>
            <person name="Nicaud S."/>
            <person name="Jaffe D."/>
            <person name="Fisher S."/>
            <person name="Lutfalla G."/>
            <person name="Dossat C."/>
            <person name="Segurens B."/>
            <person name="Dasilva C."/>
            <person name="Salanoubat M."/>
            <person name="Levy M."/>
            <person name="Boudet N."/>
            <person name="Castellano S."/>
            <person name="Anthouard V."/>
            <person name="Jubin C."/>
            <person name="Castelli V."/>
            <person name="Katinka M."/>
            <person name="Vacherie B."/>
            <person name="Biemont C."/>
            <person name="Skalli Z."/>
            <person name="Cattolico L."/>
            <person name="Poulain J."/>
            <person name="De Berardinis V."/>
            <person name="Cruaud C."/>
            <person name="Duprat S."/>
            <person name="Brottier P."/>
            <person name="Coutanceau J.-P."/>
            <person name="Gouzy J."/>
            <person name="Parra G."/>
            <person name="Lardier G."/>
            <person name="Chapple C."/>
            <person name="McKernan K.J."/>
            <person name="McEwan P."/>
            <person name="Bosak S."/>
            <person name="Kellis M."/>
            <person name="Volff J.-N."/>
            <person name="Guigo R."/>
            <person name="Zody M.C."/>
            <person name="Mesirov J."/>
            <person name="Lindblad-Toh K."/>
            <person name="Birren B."/>
            <person name="Nusbaum C."/>
            <person name="Kahn D."/>
            <person name="Robinson-Rechavi M."/>
            <person name="Laudet V."/>
            <person name="Schachter V."/>
            <person name="Quetier F."/>
            <person name="Saurin W."/>
            <person name="Scarpelli C."/>
            <person name="Wincker P."/>
            <person name="Lander E.S."/>
            <person name="Weissenbach J."/>
            <person name="Roest Crollius H."/>
        </authorList>
    </citation>
    <scope>NUCLEOTIDE SEQUENCE [LARGE SCALE GENOMIC DNA]</scope>
</reference>
<evidence type="ECO:0000250" key="1"/>
<evidence type="ECO:0000305" key="2"/>
<proteinExistence type="inferred from homology"/>
<feature type="chain" id="PRO_0000250161" description="Nucleolar protein 16">
    <location>
        <begin position="1"/>
        <end position="170"/>
    </location>
</feature>
<dbReference type="EMBL" id="CAAE01014536">
    <property type="protein sequence ID" value="CAF97276.1"/>
    <property type="molecule type" value="Genomic_DNA"/>
</dbReference>
<dbReference type="SMR" id="Q4SQ06"/>
<dbReference type="FunCoup" id="Q4SQ06">
    <property type="interactions" value="1371"/>
</dbReference>
<dbReference type="STRING" id="99883.ENSTNIP00000010431"/>
<dbReference type="KEGG" id="tng:GSTEN00014579G001"/>
<dbReference type="HOGENOM" id="CLU_115103_0_0_1"/>
<dbReference type="InParanoid" id="Q4SQ06"/>
<dbReference type="OrthoDB" id="285729at2759"/>
<dbReference type="Proteomes" id="UP000007303">
    <property type="component" value="Unassembled WGS sequence"/>
</dbReference>
<dbReference type="GO" id="GO:0005730">
    <property type="term" value="C:nucleolus"/>
    <property type="evidence" value="ECO:0007669"/>
    <property type="project" value="UniProtKB-SubCell"/>
</dbReference>
<dbReference type="GO" id="GO:0042273">
    <property type="term" value="P:ribosomal large subunit biogenesis"/>
    <property type="evidence" value="ECO:0007669"/>
    <property type="project" value="TreeGrafter"/>
</dbReference>
<dbReference type="InterPro" id="IPR019002">
    <property type="entry name" value="Ribosome_biogenesis_Nop16"/>
</dbReference>
<dbReference type="PANTHER" id="PTHR13243">
    <property type="entry name" value="HSPC111 PROTEIN-RELATED"/>
    <property type="match status" value="1"/>
</dbReference>
<dbReference type="PANTHER" id="PTHR13243:SF1">
    <property type="entry name" value="NUCLEOLAR PROTEIN 16"/>
    <property type="match status" value="1"/>
</dbReference>
<dbReference type="Pfam" id="PF09420">
    <property type="entry name" value="Nop16"/>
    <property type="match status" value="1"/>
</dbReference>